<dbReference type="EC" id="1.7.1.13" evidence="1"/>
<dbReference type="EMBL" id="CP001025">
    <property type="protein sequence ID" value="ACB65132.1"/>
    <property type="molecule type" value="Genomic_DNA"/>
</dbReference>
<dbReference type="RefSeq" id="WP_012364694.1">
    <property type="nucleotide sequence ID" value="NC_010551.1"/>
</dbReference>
<dbReference type="SMR" id="B1YWG4"/>
<dbReference type="KEGG" id="bac:BamMC406_2655"/>
<dbReference type="HOGENOM" id="CLU_054738_0_0_4"/>
<dbReference type="OrthoDB" id="9789995at2"/>
<dbReference type="UniPathway" id="UPA00392"/>
<dbReference type="Proteomes" id="UP000001680">
    <property type="component" value="Chromosome 1"/>
</dbReference>
<dbReference type="GO" id="GO:0005737">
    <property type="term" value="C:cytoplasm"/>
    <property type="evidence" value="ECO:0007669"/>
    <property type="project" value="UniProtKB-SubCell"/>
</dbReference>
<dbReference type="GO" id="GO:0033739">
    <property type="term" value="F:preQ1 synthase activity"/>
    <property type="evidence" value="ECO:0007669"/>
    <property type="project" value="UniProtKB-UniRule"/>
</dbReference>
<dbReference type="GO" id="GO:0008616">
    <property type="term" value="P:queuosine biosynthetic process"/>
    <property type="evidence" value="ECO:0007669"/>
    <property type="project" value="UniProtKB-UniRule"/>
</dbReference>
<dbReference type="GO" id="GO:0006400">
    <property type="term" value="P:tRNA modification"/>
    <property type="evidence" value="ECO:0007669"/>
    <property type="project" value="UniProtKB-UniRule"/>
</dbReference>
<dbReference type="Gene3D" id="3.30.1130.10">
    <property type="match status" value="2"/>
</dbReference>
<dbReference type="HAMAP" id="MF_00817">
    <property type="entry name" value="QueF_type2"/>
    <property type="match status" value="1"/>
</dbReference>
<dbReference type="InterPro" id="IPR043133">
    <property type="entry name" value="GTP-CH-I_C/QueF"/>
</dbReference>
<dbReference type="InterPro" id="IPR050084">
    <property type="entry name" value="NADPH_dep_7-cyano-7-deazaG_red"/>
</dbReference>
<dbReference type="InterPro" id="IPR029500">
    <property type="entry name" value="QueF"/>
</dbReference>
<dbReference type="InterPro" id="IPR029139">
    <property type="entry name" value="QueF_N"/>
</dbReference>
<dbReference type="InterPro" id="IPR016428">
    <property type="entry name" value="QueF_type2"/>
</dbReference>
<dbReference type="NCBIfam" id="TIGR03138">
    <property type="entry name" value="QueF"/>
    <property type="match status" value="1"/>
</dbReference>
<dbReference type="PANTHER" id="PTHR34354">
    <property type="entry name" value="NADPH-DEPENDENT 7-CYANO-7-DEAZAGUANINE REDUCTASE"/>
    <property type="match status" value="1"/>
</dbReference>
<dbReference type="PANTHER" id="PTHR34354:SF1">
    <property type="entry name" value="NADPH-DEPENDENT 7-CYANO-7-DEAZAGUANINE REDUCTASE"/>
    <property type="match status" value="1"/>
</dbReference>
<dbReference type="Pfam" id="PF14489">
    <property type="entry name" value="QueF"/>
    <property type="match status" value="1"/>
</dbReference>
<dbReference type="Pfam" id="PF14819">
    <property type="entry name" value="QueF_N"/>
    <property type="match status" value="1"/>
</dbReference>
<dbReference type="PIRSF" id="PIRSF004750">
    <property type="entry name" value="Nitrile_oxidored_YqcD_prd"/>
    <property type="match status" value="1"/>
</dbReference>
<dbReference type="SUPFAM" id="SSF55620">
    <property type="entry name" value="Tetrahydrobiopterin biosynthesis enzymes-like"/>
    <property type="match status" value="1"/>
</dbReference>
<proteinExistence type="inferred from homology"/>
<comment type="function">
    <text evidence="1">Catalyzes the NADPH-dependent reduction of 7-cyano-7-deazaguanine (preQ0) to 7-aminomethyl-7-deazaguanine (preQ1).</text>
</comment>
<comment type="catalytic activity">
    <reaction evidence="1">
        <text>7-aminomethyl-7-carbaguanine + 2 NADP(+) = 7-cyano-7-deazaguanine + 2 NADPH + 3 H(+)</text>
        <dbReference type="Rhea" id="RHEA:13409"/>
        <dbReference type="ChEBI" id="CHEBI:15378"/>
        <dbReference type="ChEBI" id="CHEBI:45075"/>
        <dbReference type="ChEBI" id="CHEBI:57783"/>
        <dbReference type="ChEBI" id="CHEBI:58349"/>
        <dbReference type="ChEBI" id="CHEBI:58703"/>
        <dbReference type="EC" id="1.7.1.13"/>
    </reaction>
</comment>
<comment type="pathway">
    <text evidence="1">tRNA modification; tRNA-queuosine biosynthesis.</text>
</comment>
<comment type="subunit">
    <text evidence="1">Homodimer.</text>
</comment>
<comment type="subcellular location">
    <subcellularLocation>
        <location evidence="1">Cytoplasm</location>
    </subcellularLocation>
</comment>
<comment type="similarity">
    <text evidence="1">Belongs to the GTP cyclohydrolase I family. QueF type 2 subfamily.</text>
</comment>
<keyword id="KW-0963">Cytoplasm</keyword>
<keyword id="KW-0521">NADP</keyword>
<keyword id="KW-0560">Oxidoreductase</keyword>
<keyword id="KW-0671">Queuosine biosynthesis</keyword>
<sequence length="274" mass="30443">MNPEHSPLGKATVYAAQYDASLLFPIPRAGAREQLGITSALPFFGTDIWNAYELSWLNARGKPQLAVATFYVPAESPNIVESKSFKLYLGSFAQSKFDSLDAVRDTLKRDVSAACGASVSVQLVSPHDFGKLQMEELDGLSLDRLDLDTDVYEPDPSLLSAAQEEAPVEETLVSDLLRSNCPVTGQPDWGSVQIHYVGPQIDHAGLLRYIISFRNHTGFHEQCVERIFLDILHACKPLKLAVYARYTRRGGLDINPFRTNYNQPMPDNARTARQ</sequence>
<organism>
    <name type="scientific">Burkholderia ambifaria (strain MC40-6)</name>
    <dbReference type="NCBI Taxonomy" id="398577"/>
    <lineage>
        <taxon>Bacteria</taxon>
        <taxon>Pseudomonadati</taxon>
        <taxon>Pseudomonadota</taxon>
        <taxon>Betaproteobacteria</taxon>
        <taxon>Burkholderiales</taxon>
        <taxon>Burkholderiaceae</taxon>
        <taxon>Burkholderia</taxon>
        <taxon>Burkholderia cepacia complex</taxon>
    </lineage>
</organism>
<name>QUEF_BURA4</name>
<gene>
    <name evidence="1" type="primary">queF</name>
    <name type="ordered locus">BamMC406_2655</name>
</gene>
<evidence type="ECO:0000255" key="1">
    <source>
        <dbReference type="HAMAP-Rule" id="MF_00817"/>
    </source>
</evidence>
<protein>
    <recommendedName>
        <fullName evidence="1">NADPH-dependent 7-cyano-7-deazaguanine reductase</fullName>
        <ecNumber evidence="1">1.7.1.13</ecNumber>
    </recommendedName>
    <alternativeName>
        <fullName evidence="1">7-cyano-7-carbaguanine reductase</fullName>
    </alternativeName>
    <alternativeName>
        <fullName evidence="1">NADPH-dependent nitrile oxidoreductase</fullName>
    </alternativeName>
    <alternativeName>
        <fullName evidence="1">PreQ(0) reductase</fullName>
    </alternativeName>
</protein>
<reference key="1">
    <citation type="submission" date="2008-04" db="EMBL/GenBank/DDBJ databases">
        <title>Complete sequence of chromosome 1 of Burkholderia ambifaria MC40-6.</title>
        <authorList>
            <person name="Copeland A."/>
            <person name="Lucas S."/>
            <person name="Lapidus A."/>
            <person name="Glavina del Rio T."/>
            <person name="Dalin E."/>
            <person name="Tice H."/>
            <person name="Pitluck S."/>
            <person name="Chain P."/>
            <person name="Malfatti S."/>
            <person name="Shin M."/>
            <person name="Vergez L."/>
            <person name="Lang D."/>
            <person name="Schmutz J."/>
            <person name="Larimer F."/>
            <person name="Land M."/>
            <person name="Hauser L."/>
            <person name="Kyrpides N."/>
            <person name="Lykidis A."/>
            <person name="Ramette A."/>
            <person name="Konstantinidis K."/>
            <person name="Tiedje J."/>
            <person name="Richardson P."/>
        </authorList>
    </citation>
    <scope>NUCLEOTIDE SEQUENCE [LARGE SCALE GENOMIC DNA]</scope>
    <source>
        <strain>MC40-6</strain>
    </source>
</reference>
<feature type="chain" id="PRO_1000193213" description="NADPH-dependent 7-cyano-7-deazaguanine reductase">
    <location>
        <begin position="1"/>
        <end position="274"/>
    </location>
</feature>
<feature type="active site" description="Thioimide intermediate" evidence="1">
    <location>
        <position position="181"/>
    </location>
</feature>
<feature type="active site" description="Proton donor" evidence="1">
    <location>
        <position position="188"/>
    </location>
</feature>
<feature type="binding site" evidence="1">
    <location>
        <begin position="80"/>
        <end position="82"/>
    </location>
    <ligand>
        <name>substrate</name>
    </ligand>
</feature>
<feature type="binding site" evidence="1">
    <location>
        <begin position="82"/>
        <end position="83"/>
    </location>
    <ligand>
        <name>NADPH</name>
        <dbReference type="ChEBI" id="CHEBI:57783"/>
    </ligand>
</feature>
<feature type="binding site" evidence="1">
    <location>
        <begin position="220"/>
        <end position="221"/>
    </location>
    <ligand>
        <name>substrate</name>
    </ligand>
</feature>
<feature type="binding site" evidence="1">
    <location>
        <begin position="249"/>
        <end position="250"/>
    </location>
    <ligand>
        <name>NADPH</name>
        <dbReference type="ChEBI" id="CHEBI:57783"/>
    </ligand>
</feature>
<accession>B1YWG4</accession>